<dbReference type="EMBL" id="CP000034">
    <property type="protein sequence ID" value="ABB64419.1"/>
    <property type="molecule type" value="Genomic_DNA"/>
</dbReference>
<dbReference type="RefSeq" id="WP_000858220.1">
    <property type="nucleotide sequence ID" value="NC_007606.1"/>
</dbReference>
<dbReference type="RefSeq" id="YP_405910.1">
    <property type="nucleotide sequence ID" value="NC_007606.1"/>
</dbReference>
<dbReference type="SMR" id="Q327T6"/>
<dbReference type="STRING" id="300267.SDY_4548"/>
<dbReference type="EnsemblBacteria" id="ABB64419">
    <property type="protein sequence ID" value="ABB64419"/>
    <property type="gene ID" value="SDY_4548"/>
</dbReference>
<dbReference type="KEGG" id="sdy:SDY_4548"/>
<dbReference type="PATRIC" id="fig|300267.13.peg.5376"/>
<dbReference type="HOGENOM" id="CLU_019375_7_0_6"/>
<dbReference type="Proteomes" id="UP000002716">
    <property type="component" value="Chromosome"/>
</dbReference>
<dbReference type="GO" id="GO:0005886">
    <property type="term" value="C:plasma membrane"/>
    <property type="evidence" value="ECO:0007669"/>
    <property type="project" value="UniProtKB-SubCell"/>
</dbReference>
<dbReference type="GO" id="GO:0015138">
    <property type="term" value="F:fumarate transmembrane transporter activity"/>
    <property type="evidence" value="ECO:0007669"/>
    <property type="project" value="TreeGrafter"/>
</dbReference>
<dbReference type="GO" id="GO:0015366">
    <property type="term" value="F:malate:proton symporter activity"/>
    <property type="evidence" value="ECO:0007669"/>
    <property type="project" value="TreeGrafter"/>
</dbReference>
<dbReference type="GO" id="GO:0015141">
    <property type="term" value="F:succinate transmembrane transporter activity"/>
    <property type="evidence" value="ECO:0007669"/>
    <property type="project" value="TreeGrafter"/>
</dbReference>
<dbReference type="GO" id="GO:0070778">
    <property type="term" value="P:L-aspartate transmembrane transport"/>
    <property type="evidence" value="ECO:0007669"/>
    <property type="project" value="TreeGrafter"/>
</dbReference>
<dbReference type="FunFam" id="1.10.3860.10:FF:000001">
    <property type="entry name" value="C4-dicarboxylate transport protein"/>
    <property type="match status" value="1"/>
</dbReference>
<dbReference type="Gene3D" id="1.10.3860.10">
    <property type="entry name" value="Sodium:dicarboxylate symporter"/>
    <property type="match status" value="1"/>
</dbReference>
<dbReference type="HAMAP" id="MF_01300">
    <property type="entry name" value="C4_dicarb_transport"/>
    <property type="match status" value="1"/>
</dbReference>
<dbReference type="InterPro" id="IPR023954">
    <property type="entry name" value="C4_dicarb_transport"/>
</dbReference>
<dbReference type="InterPro" id="IPR001991">
    <property type="entry name" value="Na-dicarboxylate_symporter"/>
</dbReference>
<dbReference type="InterPro" id="IPR018107">
    <property type="entry name" value="Na-dicarboxylate_symporter_CS"/>
</dbReference>
<dbReference type="InterPro" id="IPR036458">
    <property type="entry name" value="Na:dicarbo_symporter_sf"/>
</dbReference>
<dbReference type="NCBIfam" id="NF002461">
    <property type="entry name" value="PRK01663.1"/>
    <property type="match status" value="1"/>
</dbReference>
<dbReference type="NCBIfam" id="NF009587">
    <property type="entry name" value="PRK13027.1"/>
    <property type="match status" value="1"/>
</dbReference>
<dbReference type="PANTHER" id="PTHR42865:SF1">
    <property type="entry name" value="AEROBIC C4-DICARBOXYLATE TRANSPORT PROTEIN"/>
    <property type="match status" value="1"/>
</dbReference>
<dbReference type="PANTHER" id="PTHR42865">
    <property type="entry name" value="PROTON/GLUTAMATE-ASPARTATE SYMPORTER"/>
    <property type="match status" value="1"/>
</dbReference>
<dbReference type="Pfam" id="PF00375">
    <property type="entry name" value="SDF"/>
    <property type="match status" value="1"/>
</dbReference>
<dbReference type="PRINTS" id="PR00173">
    <property type="entry name" value="EDTRNSPORT"/>
</dbReference>
<dbReference type="SUPFAM" id="SSF118215">
    <property type="entry name" value="Proton glutamate symport protein"/>
    <property type="match status" value="1"/>
</dbReference>
<dbReference type="PROSITE" id="PS00713">
    <property type="entry name" value="NA_DICARBOXYL_SYMP_1"/>
    <property type="match status" value="1"/>
</dbReference>
<dbReference type="PROSITE" id="PS00714">
    <property type="entry name" value="NA_DICARBOXYL_SYMP_2"/>
    <property type="match status" value="1"/>
</dbReference>
<feature type="chain" id="PRO_1000067466" description="C4-dicarboxylate transport protein">
    <location>
        <begin position="1"/>
        <end position="428"/>
    </location>
</feature>
<feature type="transmembrane region" description="Helical" evidence="1">
    <location>
        <begin position="8"/>
        <end position="28"/>
    </location>
</feature>
<feature type="transmembrane region" description="Helical" evidence="1">
    <location>
        <begin position="44"/>
        <end position="64"/>
    </location>
</feature>
<feature type="transmembrane region" description="Helical" evidence="1">
    <location>
        <begin position="76"/>
        <end position="96"/>
    </location>
</feature>
<feature type="transmembrane region" description="Helical" evidence="1">
    <location>
        <begin position="142"/>
        <end position="162"/>
    </location>
</feature>
<feature type="transmembrane region" description="Helical" evidence="1">
    <location>
        <begin position="184"/>
        <end position="204"/>
    </location>
</feature>
<feature type="transmembrane region" description="Helical" evidence="1">
    <location>
        <begin position="222"/>
        <end position="242"/>
    </location>
</feature>
<feature type="transmembrane region" description="Helical" evidence="1">
    <location>
        <begin position="326"/>
        <end position="346"/>
    </location>
</feature>
<feature type="transmembrane region" description="Helical" evidence="1">
    <location>
        <begin position="352"/>
        <end position="372"/>
    </location>
</feature>
<proteinExistence type="inferred from homology"/>
<reference key="1">
    <citation type="journal article" date="2005" name="Nucleic Acids Res.">
        <title>Genome dynamics and diversity of Shigella species, the etiologic agents of bacillary dysentery.</title>
        <authorList>
            <person name="Yang F."/>
            <person name="Yang J."/>
            <person name="Zhang X."/>
            <person name="Chen L."/>
            <person name="Jiang Y."/>
            <person name="Yan Y."/>
            <person name="Tang X."/>
            <person name="Wang J."/>
            <person name="Xiong Z."/>
            <person name="Dong J."/>
            <person name="Xue Y."/>
            <person name="Zhu Y."/>
            <person name="Xu X."/>
            <person name="Sun L."/>
            <person name="Chen S."/>
            <person name="Nie H."/>
            <person name="Peng J."/>
            <person name="Xu J."/>
            <person name="Wang Y."/>
            <person name="Yuan Z."/>
            <person name="Wen Y."/>
            <person name="Yao Z."/>
            <person name="Shen Y."/>
            <person name="Qiang B."/>
            <person name="Hou Y."/>
            <person name="Yu J."/>
            <person name="Jin Q."/>
        </authorList>
    </citation>
    <scope>NUCLEOTIDE SEQUENCE [LARGE SCALE GENOMIC DNA]</scope>
    <source>
        <strain>Sd197</strain>
    </source>
</reference>
<evidence type="ECO:0000255" key="1">
    <source>
        <dbReference type="HAMAP-Rule" id="MF_01300"/>
    </source>
</evidence>
<sequence>MKTSLFKSLYFQVLTAIAIGILLGHFYPEIGEQMKPLGDGFVKLIKMIIAPVIFCTVVTGIAGMESMKAVGRTGAVALLYFEIVSTIALIIGLIIVNVVQPGAGMNVDPATLDAKAVEVYADQAKDQGIVAFIMDVIPASVIGAFASGNILQVLLFAVLFGFALHRLGSKGQLIFNVIESFSQVIFGIINMIMRLAPIGAFGAMAFTIGKYGVGTLVQLGQLIICFYITCILFVVLVLGSIAKATGFSIFKFIRYIREELLIVLGTSSSESALPRMLDKMEKLGCRKSVVGLVIPTGYSFNLDGTSIYLTMAAVFIAQATNSQMDIVHQITLLIVLLLSSKGAAGVTGSGFIVLAATLSAVGHLPVAGLALILGIDRFMSEARALTNLVGNGVATIVVAKWVKELDHKKLDDVLNNRAPDGKTHELSS</sequence>
<name>DCTA_SHIDS</name>
<protein>
    <recommendedName>
        <fullName evidence="1">C4-dicarboxylate transport protein</fullName>
    </recommendedName>
</protein>
<comment type="function">
    <text evidence="1">Responsible for the transport of dicarboxylates such as succinate, fumarate, and malate from the periplasm across the membrane.</text>
</comment>
<comment type="subcellular location">
    <subcellularLocation>
        <location evidence="1">Cell inner membrane</location>
        <topology evidence="1">Multi-pass membrane protein</topology>
    </subcellularLocation>
</comment>
<comment type="similarity">
    <text evidence="1">Belongs to the dicarboxylate/amino acid:cation symporter (DAACS) (TC 2.A.23) family.</text>
</comment>
<keyword id="KW-0997">Cell inner membrane</keyword>
<keyword id="KW-1003">Cell membrane</keyword>
<keyword id="KW-0472">Membrane</keyword>
<keyword id="KW-1185">Reference proteome</keyword>
<keyword id="KW-0769">Symport</keyword>
<keyword id="KW-0812">Transmembrane</keyword>
<keyword id="KW-1133">Transmembrane helix</keyword>
<keyword id="KW-0813">Transport</keyword>
<accession>Q327T6</accession>
<gene>
    <name evidence="1" type="primary">dctA</name>
    <name type="ordered locus">SDY_4548</name>
</gene>
<organism>
    <name type="scientific">Shigella dysenteriae serotype 1 (strain Sd197)</name>
    <dbReference type="NCBI Taxonomy" id="300267"/>
    <lineage>
        <taxon>Bacteria</taxon>
        <taxon>Pseudomonadati</taxon>
        <taxon>Pseudomonadota</taxon>
        <taxon>Gammaproteobacteria</taxon>
        <taxon>Enterobacterales</taxon>
        <taxon>Enterobacteriaceae</taxon>
        <taxon>Shigella</taxon>
    </lineage>
</organism>